<proteinExistence type="evidence at protein level"/>
<comment type="function">
    <text evidence="2">Catalyzes the methylation of glycine and sarcosine to sarcosine and dimethylglycine, respectively, with S-adenosylmethionine (AdoMet) acting as the methyl donor.</text>
</comment>
<comment type="catalytic activity">
    <reaction evidence="2">
        <text>glycine + 2 S-adenosyl-L-methionine = N,N-dimethylglycine + 2 S-adenosyl-L-homocysteine + 2 H(+)</text>
        <dbReference type="Rhea" id="RHEA:32463"/>
        <dbReference type="ChEBI" id="CHEBI:15378"/>
        <dbReference type="ChEBI" id="CHEBI:57305"/>
        <dbReference type="ChEBI" id="CHEBI:57856"/>
        <dbReference type="ChEBI" id="CHEBI:58251"/>
        <dbReference type="ChEBI" id="CHEBI:59789"/>
        <dbReference type="EC" id="2.1.1.156"/>
    </reaction>
    <physiologicalReaction direction="left-to-right" evidence="2">
        <dbReference type="Rhea" id="RHEA:32464"/>
    </physiologicalReaction>
</comment>
<comment type="catalytic activity">
    <reaction evidence="2">
        <text>glycine + S-adenosyl-L-methionine = sarcosine + S-adenosyl-L-homocysteine + H(+)</text>
        <dbReference type="Rhea" id="RHEA:19937"/>
        <dbReference type="ChEBI" id="CHEBI:15378"/>
        <dbReference type="ChEBI" id="CHEBI:57305"/>
        <dbReference type="ChEBI" id="CHEBI:57433"/>
        <dbReference type="ChEBI" id="CHEBI:57856"/>
        <dbReference type="ChEBI" id="CHEBI:59789"/>
    </reaction>
    <physiologicalReaction direction="left-to-right" evidence="2">
        <dbReference type="Rhea" id="RHEA:19938"/>
    </physiologicalReaction>
</comment>
<comment type="catalytic activity">
    <reaction evidence="2">
        <text>sarcosine + S-adenosyl-L-methionine = N,N-dimethylglycine + S-adenosyl-L-homocysteine + H(+)</text>
        <dbReference type="Rhea" id="RHEA:15453"/>
        <dbReference type="ChEBI" id="CHEBI:15378"/>
        <dbReference type="ChEBI" id="CHEBI:57433"/>
        <dbReference type="ChEBI" id="CHEBI:57856"/>
        <dbReference type="ChEBI" id="CHEBI:58251"/>
        <dbReference type="ChEBI" id="CHEBI:59789"/>
    </reaction>
    <physiologicalReaction direction="left-to-right" evidence="2">
        <dbReference type="Rhea" id="RHEA:15454"/>
    </physiologicalReaction>
</comment>
<comment type="activity regulation">
    <text evidence="2">Inhibited by acetate, dimethylglycine and S-adenosyl-L-homocysteine.</text>
</comment>
<comment type="biophysicochemical properties">
    <kinetics>
        <KM evidence="2">0.6 mM for S-adenosyl-L-homocysteine (at pH 8.8 and at 37 degrees Celsius)</KM>
        <KM evidence="2">0.8 mM for sarcosine (at pH 8.8 and at 37 degrees Celsius)</KM>
        <KM evidence="2">1.5 mM for glycine (at pH 8.8 and at 37 degrees Celsius)</KM>
        <Vmax evidence="2">0.5 umol/min/mg enzyme (at pH 8.8 and at 37 degrees Celsius)</Vmax>
    </kinetics>
    <phDependence>
        <text evidence="2">Optimum pH is 8.8. The activities remain high at more alkaline pH but decrease sharply at the acidic side of the optimal pH.</text>
    </phDependence>
</comment>
<comment type="pathway">
    <text evidence="2">Amine and polyamine biosynthesis; betaine biosynthesis via glycine pathway; betaine from glycine: step 1/3.</text>
</comment>
<comment type="pathway">
    <text evidence="2">Amine and polyamine biosynthesis; betaine biosynthesis via glycine pathway; betaine from glycine: step 2/3.</text>
</comment>
<comment type="subunit">
    <text evidence="2">Monomer.</text>
</comment>
<comment type="similarity">
    <text evidence="1">Belongs to the class I-like SAM-binding methyltransferase superfamily. Glycine N-methyltransferase family.</text>
</comment>
<reference key="1">
    <citation type="journal article" date="2003" name="J. Biol. Chem.">
        <title>Isolation and functional characterization of N-methyltransferases that catalyze betaine synthesis from glycine in a halotolerant photosynthetic organism Aphanothece halophytica.</title>
        <authorList>
            <person name="Waditee R."/>
            <person name="Tanaka Y."/>
            <person name="Aoki K."/>
            <person name="Hibino T."/>
            <person name="Jikuya H."/>
            <person name="Takano J."/>
            <person name="Takabe T."/>
            <person name="Takabe T."/>
        </authorList>
    </citation>
    <scope>NUCLEOTIDE SEQUENCE [GENOMIC DNA]</scope>
    <scope>FUNCTION AS A METHYLTRANSFERASE AND IN BETAINE BIOSYNTHESIS</scope>
    <scope>CATALYTIC ACTIVITY</scope>
    <scope>PATHWAY</scope>
    <scope>BIOPHYSICOCHEMICAL PROPERTIES</scope>
    <scope>SUBSTRATE SPECIFICITY</scope>
    <scope>ACTIVITY REGULATION</scope>
    <scope>SUBUNIT</scope>
    <scope>MUTAGENESIS OF ARG-169</scope>
</reference>
<dbReference type="EC" id="2.1.1.156" evidence="2"/>
<dbReference type="EMBL" id="AB094497">
    <property type="protein sequence ID" value="BAC56939.1"/>
    <property type="molecule type" value="Genomic_DNA"/>
</dbReference>
<dbReference type="SMR" id="Q83WC4"/>
<dbReference type="KEGG" id="ag:BAC56939"/>
<dbReference type="BioCyc" id="MetaCyc:MONOMER-8562"/>
<dbReference type="BRENDA" id="2.1.1.156">
    <property type="organism ID" value="383"/>
</dbReference>
<dbReference type="UniPathway" id="UPA00530">
    <property type="reaction ID" value="UER00381"/>
</dbReference>
<dbReference type="UniPathway" id="UPA00530">
    <property type="reaction ID" value="UER00382"/>
</dbReference>
<dbReference type="GO" id="GO:0005829">
    <property type="term" value="C:cytosol"/>
    <property type="evidence" value="ECO:0007669"/>
    <property type="project" value="TreeGrafter"/>
</dbReference>
<dbReference type="GO" id="GO:0016594">
    <property type="term" value="F:glycine binding"/>
    <property type="evidence" value="ECO:0007669"/>
    <property type="project" value="TreeGrafter"/>
</dbReference>
<dbReference type="GO" id="GO:0017174">
    <property type="term" value="F:glycine N-methyltransferase activity"/>
    <property type="evidence" value="ECO:0000314"/>
    <property type="project" value="UniProtKB"/>
</dbReference>
<dbReference type="GO" id="GO:0042802">
    <property type="term" value="F:identical protein binding"/>
    <property type="evidence" value="ECO:0007669"/>
    <property type="project" value="TreeGrafter"/>
</dbReference>
<dbReference type="GO" id="GO:1904047">
    <property type="term" value="F:S-adenosyl-L-methionine binding"/>
    <property type="evidence" value="ECO:0007669"/>
    <property type="project" value="TreeGrafter"/>
</dbReference>
<dbReference type="GO" id="GO:0052730">
    <property type="term" value="F:sarcosine N-methyltransferase activity"/>
    <property type="evidence" value="ECO:0000314"/>
    <property type="project" value="UniProtKB"/>
</dbReference>
<dbReference type="GO" id="GO:0019286">
    <property type="term" value="P:glycine betaine biosynthetic process from glycine"/>
    <property type="evidence" value="ECO:0000314"/>
    <property type="project" value="UniProtKB"/>
</dbReference>
<dbReference type="GO" id="GO:0032259">
    <property type="term" value="P:methylation"/>
    <property type="evidence" value="ECO:0000314"/>
    <property type="project" value="UniProtKB"/>
</dbReference>
<dbReference type="GO" id="GO:0006730">
    <property type="term" value="P:one-carbon metabolic process"/>
    <property type="evidence" value="ECO:0007669"/>
    <property type="project" value="TreeGrafter"/>
</dbReference>
<dbReference type="GO" id="GO:0051289">
    <property type="term" value="P:protein homotetramerization"/>
    <property type="evidence" value="ECO:0007669"/>
    <property type="project" value="TreeGrafter"/>
</dbReference>
<dbReference type="GO" id="GO:0006111">
    <property type="term" value="P:regulation of gluconeogenesis"/>
    <property type="evidence" value="ECO:0007669"/>
    <property type="project" value="TreeGrafter"/>
</dbReference>
<dbReference type="GO" id="GO:0046498">
    <property type="term" value="P:S-adenosylhomocysteine metabolic process"/>
    <property type="evidence" value="ECO:0007669"/>
    <property type="project" value="TreeGrafter"/>
</dbReference>
<dbReference type="GO" id="GO:0046500">
    <property type="term" value="P:S-adenosylmethionine metabolic process"/>
    <property type="evidence" value="ECO:0007669"/>
    <property type="project" value="TreeGrafter"/>
</dbReference>
<dbReference type="GO" id="GO:1901052">
    <property type="term" value="P:sarcosine metabolic process"/>
    <property type="evidence" value="ECO:0007669"/>
    <property type="project" value="TreeGrafter"/>
</dbReference>
<dbReference type="CDD" id="cd02440">
    <property type="entry name" value="AdoMet_MTases"/>
    <property type="match status" value="1"/>
</dbReference>
<dbReference type="Gene3D" id="3.30.46.10">
    <property type="entry name" value="Glycine N-methyltransferase, chain A, domain 1"/>
    <property type="match status" value="1"/>
</dbReference>
<dbReference type="Gene3D" id="3.40.50.150">
    <property type="entry name" value="Vaccinia Virus protein VP39"/>
    <property type="match status" value="1"/>
</dbReference>
<dbReference type="InterPro" id="IPR014369">
    <property type="entry name" value="Gly/Sar_N_MeTrfase"/>
</dbReference>
<dbReference type="InterPro" id="IPR041698">
    <property type="entry name" value="Methyltransf_25"/>
</dbReference>
<dbReference type="InterPro" id="IPR029063">
    <property type="entry name" value="SAM-dependent_MTases_sf"/>
</dbReference>
<dbReference type="PANTHER" id="PTHR16458">
    <property type="entry name" value="GLYCINE N-METHYLTRANSFERASE"/>
    <property type="match status" value="1"/>
</dbReference>
<dbReference type="PANTHER" id="PTHR16458:SF2">
    <property type="entry name" value="GLYCINE N-METHYLTRANSFERASE"/>
    <property type="match status" value="1"/>
</dbReference>
<dbReference type="Pfam" id="PF13649">
    <property type="entry name" value="Methyltransf_25"/>
    <property type="match status" value="1"/>
</dbReference>
<dbReference type="PIRSF" id="PIRSF000385">
    <property type="entry name" value="Gly_N-mtase"/>
    <property type="match status" value="1"/>
</dbReference>
<dbReference type="SUPFAM" id="SSF53335">
    <property type="entry name" value="S-adenosyl-L-methionine-dependent methyltransferases"/>
    <property type="match status" value="1"/>
</dbReference>
<dbReference type="PROSITE" id="PS51600">
    <property type="entry name" value="SAM_GNMT"/>
    <property type="match status" value="1"/>
</dbReference>
<feature type="chain" id="PRO_0000412534" description="Glycine/sarcosine N-methyltransferase">
    <location>
        <begin position="1"/>
        <end position="265"/>
    </location>
</feature>
<feature type="binding site" evidence="1">
    <location>
        <position position="28"/>
    </location>
    <ligand>
        <name>S-adenosyl-L-methionine</name>
        <dbReference type="ChEBI" id="CHEBI:59789"/>
    </ligand>
</feature>
<feature type="binding site" evidence="1">
    <location>
        <position position="36"/>
    </location>
    <ligand>
        <name>S-adenosyl-L-methionine</name>
        <dbReference type="ChEBI" id="CHEBI:59789"/>
    </ligand>
</feature>
<feature type="binding site" evidence="1">
    <location>
        <position position="45"/>
    </location>
    <ligand>
        <name>S-adenosyl-L-methionine</name>
        <dbReference type="ChEBI" id="CHEBI:59789"/>
    </ligand>
</feature>
<feature type="binding site" evidence="1">
    <location>
        <position position="69"/>
    </location>
    <ligand>
        <name>S-adenosyl-L-methionine</name>
        <dbReference type="ChEBI" id="CHEBI:59789"/>
    </ligand>
</feature>
<feature type="binding site" evidence="1">
    <location>
        <position position="90"/>
    </location>
    <ligand>
        <name>S-adenosyl-L-methionine</name>
        <dbReference type="ChEBI" id="CHEBI:59789"/>
    </ligand>
</feature>
<feature type="binding site" evidence="1">
    <location>
        <begin position="116"/>
        <end position="117"/>
    </location>
    <ligand>
        <name>S-adenosyl-L-methionine</name>
        <dbReference type="ChEBI" id="CHEBI:59789"/>
    </ligand>
</feature>
<feature type="binding site" evidence="1">
    <location>
        <position position="134"/>
    </location>
    <ligand>
        <name>S-adenosyl-L-methionine</name>
        <dbReference type="ChEBI" id="CHEBI:59789"/>
    </ligand>
</feature>
<feature type="binding site" evidence="1">
    <location>
        <position position="136"/>
    </location>
    <ligand>
        <name>substrate</name>
    </ligand>
</feature>
<feature type="binding site" evidence="4">
    <location>
        <position position="169"/>
    </location>
    <ligand>
        <name>substrate</name>
    </ligand>
</feature>
<feature type="binding site" evidence="1">
    <location>
        <position position="208"/>
    </location>
    <ligand>
        <name>substrate</name>
    </ligand>
</feature>
<feature type="mutagenesis site" description="Completely inactive." evidence="2">
    <original>R</original>
    <variation>E</variation>
    <location>
        <position position="169"/>
    </location>
</feature>
<feature type="mutagenesis site" description="The affinity for glycine and sarcosine decrease 50- and 63-fold, respectively, whereas the affinity for AdoMet changes only within 2-fold. Not able to catalyze the methylation of dimethylglycine." evidence="2">
    <original>R</original>
    <variation>K</variation>
    <location>
        <position position="169"/>
    </location>
</feature>
<evidence type="ECO:0000255" key="1">
    <source>
        <dbReference type="PROSITE-ProRule" id="PRU00932"/>
    </source>
</evidence>
<evidence type="ECO:0000269" key="2">
    <source>
    </source>
</evidence>
<evidence type="ECO:0000303" key="3">
    <source>
    </source>
</evidence>
<evidence type="ECO:0000305" key="4"/>
<organism>
    <name type="scientific">Aphanothece halophytica</name>
    <dbReference type="NCBI Taxonomy" id="72020"/>
    <lineage>
        <taxon>Bacteria</taxon>
        <taxon>Bacillati</taxon>
        <taxon>Cyanobacteriota</taxon>
        <taxon>Cyanophyceae</taxon>
        <taxon>Oscillatoriophycideae</taxon>
        <taxon>Chroococcales</taxon>
        <taxon>Aphanothecaceae</taxon>
        <taxon>Aphanothece</taxon>
    </lineage>
</organism>
<protein>
    <recommendedName>
        <fullName evidence="4">Glycine/sarcosine N-methyltransferase</fullName>
        <ecNumber evidence="2">2.1.1.156</ecNumber>
    </recommendedName>
    <alternativeName>
        <fullName evidence="3">ApGSMT</fullName>
    </alternativeName>
</protein>
<keyword id="KW-0489">Methyltransferase</keyword>
<keyword id="KW-0949">S-adenosyl-L-methionine</keyword>
<keyword id="KW-0808">Transferase</keyword>
<name>GSMT_APHHA</name>
<sequence>MAIKEKQVQDYGENPIEVRDSDHYQNEYIEGFVEKWDELINWHARSSSEGEFFIKTLKEHGAKRVLDAATGTGFHSIRLIEAGFDVASVDGSVEMLVKAFENATRKDQILRTVHSDWRQVTRHIQERFDAVICLGNSFTHLFSEEDRRKTLAEFYSVLKHDGILILDQRNYDLILDEGFKSKHTYYYCGDNVKAEPEYVDDGLARFRYEFPDQSVYHLNMFPLRKDYVRRLLHEVGFQDITTYGDFQETYHQDDPDFYIHVAKKD</sequence>
<accession>Q83WC4</accession>